<feature type="chain" id="PRO_0000389483" description="Immunity protein YezG">
    <location>
        <begin position="1"/>
        <end position="151"/>
    </location>
</feature>
<feature type="coiled-coil region" evidence="2">
    <location>
        <begin position="62"/>
        <end position="90"/>
    </location>
</feature>
<reference key="1">
    <citation type="submission" date="1997-07" db="EMBL/GenBank/DDBJ databases">
        <title>The 55-58 degree segment of the Bacillus subtilis chromosome, a region spanning from the purA gene cluster to the cotJ operon.</title>
        <authorList>
            <person name="Borriss R."/>
            <person name="Schroeter R."/>
        </authorList>
    </citation>
    <scope>NUCLEOTIDE SEQUENCE [GENOMIC DNA]</scope>
    <source>
        <strain>168</strain>
    </source>
</reference>
<reference key="2">
    <citation type="journal article" date="1997" name="Nature">
        <title>The complete genome sequence of the Gram-positive bacterium Bacillus subtilis.</title>
        <authorList>
            <person name="Kunst F."/>
            <person name="Ogasawara N."/>
            <person name="Moszer I."/>
            <person name="Albertini A.M."/>
            <person name="Alloni G."/>
            <person name="Azevedo V."/>
            <person name="Bertero M.G."/>
            <person name="Bessieres P."/>
            <person name="Bolotin A."/>
            <person name="Borchert S."/>
            <person name="Borriss R."/>
            <person name="Boursier L."/>
            <person name="Brans A."/>
            <person name="Braun M."/>
            <person name="Brignell S.C."/>
            <person name="Bron S."/>
            <person name="Brouillet S."/>
            <person name="Bruschi C.V."/>
            <person name="Caldwell B."/>
            <person name="Capuano V."/>
            <person name="Carter N.M."/>
            <person name="Choi S.-K."/>
            <person name="Codani J.-J."/>
            <person name="Connerton I.F."/>
            <person name="Cummings N.J."/>
            <person name="Daniel R.A."/>
            <person name="Denizot F."/>
            <person name="Devine K.M."/>
            <person name="Duesterhoeft A."/>
            <person name="Ehrlich S.D."/>
            <person name="Emmerson P.T."/>
            <person name="Entian K.-D."/>
            <person name="Errington J."/>
            <person name="Fabret C."/>
            <person name="Ferrari E."/>
            <person name="Foulger D."/>
            <person name="Fritz C."/>
            <person name="Fujita M."/>
            <person name="Fujita Y."/>
            <person name="Fuma S."/>
            <person name="Galizzi A."/>
            <person name="Galleron N."/>
            <person name="Ghim S.-Y."/>
            <person name="Glaser P."/>
            <person name="Goffeau A."/>
            <person name="Golightly E.J."/>
            <person name="Grandi G."/>
            <person name="Guiseppi G."/>
            <person name="Guy B.J."/>
            <person name="Haga K."/>
            <person name="Haiech J."/>
            <person name="Harwood C.R."/>
            <person name="Henaut A."/>
            <person name="Hilbert H."/>
            <person name="Holsappel S."/>
            <person name="Hosono S."/>
            <person name="Hullo M.-F."/>
            <person name="Itaya M."/>
            <person name="Jones L.-M."/>
            <person name="Joris B."/>
            <person name="Karamata D."/>
            <person name="Kasahara Y."/>
            <person name="Klaerr-Blanchard M."/>
            <person name="Klein C."/>
            <person name="Kobayashi Y."/>
            <person name="Koetter P."/>
            <person name="Koningstein G."/>
            <person name="Krogh S."/>
            <person name="Kumano M."/>
            <person name="Kurita K."/>
            <person name="Lapidus A."/>
            <person name="Lardinois S."/>
            <person name="Lauber J."/>
            <person name="Lazarevic V."/>
            <person name="Lee S.-M."/>
            <person name="Levine A."/>
            <person name="Liu H."/>
            <person name="Masuda S."/>
            <person name="Mauel C."/>
            <person name="Medigue C."/>
            <person name="Medina N."/>
            <person name="Mellado R.P."/>
            <person name="Mizuno M."/>
            <person name="Moestl D."/>
            <person name="Nakai S."/>
            <person name="Noback M."/>
            <person name="Noone D."/>
            <person name="O'Reilly M."/>
            <person name="Ogawa K."/>
            <person name="Ogiwara A."/>
            <person name="Oudega B."/>
            <person name="Park S.-H."/>
            <person name="Parro V."/>
            <person name="Pohl T.M."/>
            <person name="Portetelle D."/>
            <person name="Porwollik S."/>
            <person name="Prescott A.M."/>
            <person name="Presecan E."/>
            <person name="Pujic P."/>
            <person name="Purnelle B."/>
            <person name="Rapoport G."/>
            <person name="Rey M."/>
            <person name="Reynolds S."/>
            <person name="Rieger M."/>
            <person name="Rivolta C."/>
            <person name="Rocha E."/>
            <person name="Roche B."/>
            <person name="Rose M."/>
            <person name="Sadaie Y."/>
            <person name="Sato T."/>
            <person name="Scanlan E."/>
            <person name="Schleich S."/>
            <person name="Schroeter R."/>
            <person name="Scoffone F."/>
            <person name="Sekiguchi J."/>
            <person name="Sekowska A."/>
            <person name="Seror S.J."/>
            <person name="Serror P."/>
            <person name="Shin B.-S."/>
            <person name="Soldo B."/>
            <person name="Sorokin A."/>
            <person name="Tacconi E."/>
            <person name="Takagi T."/>
            <person name="Takahashi H."/>
            <person name="Takemaru K."/>
            <person name="Takeuchi M."/>
            <person name="Tamakoshi A."/>
            <person name="Tanaka T."/>
            <person name="Terpstra P."/>
            <person name="Tognoni A."/>
            <person name="Tosato V."/>
            <person name="Uchiyama S."/>
            <person name="Vandenbol M."/>
            <person name="Vannier F."/>
            <person name="Vassarotti A."/>
            <person name="Viari A."/>
            <person name="Wambutt R."/>
            <person name="Wedler E."/>
            <person name="Wedler H."/>
            <person name="Weitzenegger T."/>
            <person name="Winters P."/>
            <person name="Wipat A."/>
            <person name="Yamamoto H."/>
            <person name="Yamane K."/>
            <person name="Yasumoto K."/>
            <person name="Yata K."/>
            <person name="Yoshida K."/>
            <person name="Yoshikawa H.-F."/>
            <person name="Zumstein E."/>
            <person name="Yoshikawa H."/>
            <person name="Danchin A."/>
        </authorList>
    </citation>
    <scope>NUCLEOTIDE SEQUENCE [LARGE SCALE GENOMIC DNA]</scope>
    <source>
        <strain>168</strain>
    </source>
</reference>
<reference key="3">
    <citation type="journal article" date="2012" name="FEBS Lett.">
        <title>A novel family of toxin/antitoxin proteins in Bacillus species.</title>
        <authorList>
            <person name="Holberger L.E."/>
            <person name="Garza-Sanchez F."/>
            <person name="Lamoureux J."/>
            <person name="Low D.A."/>
            <person name="Hayes C.S."/>
        </authorList>
    </citation>
    <scope>IDENTIFICATION OF TOXIN-IMMUNITY PAIR</scope>
    <scope>INTERACTION WITH YEEF</scope>
    <source>
        <strain>168</strain>
    </source>
</reference>
<reference key="4">
    <citation type="journal article" date="2021" name="PLoS Genet.">
        <title>Diverse LXG toxin and antitoxin systems specifically mediate intraspecies competition in Bacillus subtilis biofilms.</title>
        <authorList>
            <person name="Kobayashi K."/>
        </authorList>
    </citation>
    <scope>FUNCTION AS AN IMMUNITY PROTEIN</scope>
    <scope>INDUCTION</scope>
    <scope>DISRUPTION PHENOTYPE</scope>
    <source>
        <strain>168 / Marburg / ATCC 6051 / DSM 10 / JCM 1465 / NBRC 13719 / NCIMB 3610 / NRRL NRS-744 / VKM B-501</strain>
    </source>
</reference>
<comment type="function">
    <text evidence="4 6">Immunity component of one of 6 LXG toxin-immunity modules in this strain. They promote kin selection, mediate competition in biofilms, and drive spatial segregation of different strains, indicating that LXG toxins may help avoid warfare between strains in biofilms. Mediates intercellular competition during biofilm formation; disruption of the operon disadvantages the bacteria, but overexpression of the cognate immunity protein restores growth in competition with wild-type. In situ neutralizes the toxic effect of cognate toxin YeeF (PubMed:34280190). Probably neutralizes the ability to inhibit growth of cognate toxin YeeF. Probably does not have immunity protein activity on other LXG toxins (Probable).</text>
</comment>
<comment type="subunit">
    <text evidence="1 3">Interacts with cognate toxin YeeF but not with non-cognate toxin YobL. The interaction probably inhibits the toxic activity of YeeF (PubMed:22200572). May bind with a stoichiometry of 2:2 to YeeF (By similarity).</text>
</comment>
<comment type="subcellular location">
    <subcellularLocation>
        <location evidence="5">Cytoplasm</location>
    </subcellularLocation>
</comment>
<comment type="induction">
    <text evidence="4">Expressed on rich and minimal solid media likely in early stationary phase; dependent on DegSU. Not expressed in liquid LB, but only under conditions that promote biofilm formation.</text>
</comment>
<comment type="disruption phenotype">
    <text evidence="4">Deletion of the yeeF-yezG operon has no visible growth phenotype, however it is out-competed by wild-type cells.</text>
</comment>
<comment type="sequence caution" evidence="5">
    <conflict type="erroneous initiation">
        <sequence resource="EMBL-CDS" id="AAB66478"/>
    </conflict>
    <text>Extended N-terminus.</text>
</comment>
<keyword id="KW-0175">Coiled coil</keyword>
<keyword id="KW-0963">Cytoplasm</keyword>
<keyword id="KW-1185">Reference proteome</keyword>
<name>YEZG_BACSU</name>
<dbReference type="EMBL" id="AF012532">
    <property type="protein sequence ID" value="AAB66478.1"/>
    <property type="status" value="ALT_INIT"/>
    <property type="molecule type" value="Genomic_DNA"/>
</dbReference>
<dbReference type="EMBL" id="AL009126">
    <property type="protein sequence ID" value="CAX52579.1"/>
    <property type="molecule type" value="Genomic_DNA"/>
</dbReference>
<dbReference type="RefSeq" id="WP_010886434.1">
    <property type="nucleotide sequence ID" value="NZ_OZ025638.1"/>
</dbReference>
<dbReference type="RefSeq" id="YP_003097692.1">
    <property type="nucleotide sequence ID" value="NC_000964.3"/>
</dbReference>
<dbReference type="SMR" id="C0H3X4"/>
<dbReference type="FunCoup" id="C0H3X4">
    <property type="interactions" value="5"/>
</dbReference>
<dbReference type="IntAct" id="C0H3X4">
    <property type="interactions" value="1"/>
</dbReference>
<dbReference type="MINT" id="C0H3X4"/>
<dbReference type="STRING" id="224308.BSU06811"/>
<dbReference type="PaxDb" id="224308-BSU06811"/>
<dbReference type="EnsemblBacteria" id="CAX52579">
    <property type="protein sequence ID" value="CAX52579"/>
    <property type="gene ID" value="BSU_06811"/>
</dbReference>
<dbReference type="GeneID" id="8303066"/>
<dbReference type="KEGG" id="bsu:BSU06811"/>
<dbReference type="PATRIC" id="fig|224308.43.peg.718"/>
<dbReference type="eggNOG" id="ENOG5032YNG">
    <property type="taxonomic scope" value="Bacteria"/>
</dbReference>
<dbReference type="InParanoid" id="C0H3X4"/>
<dbReference type="OrthoDB" id="1633905at2"/>
<dbReference type="PhylomeDB" id="C0H3X4"/>
<dbReference type="BioCyc" id="BSUB:BSU06811-MONOMER"/>
<dbReference type="Proteomes" id="UP000001570">
    <property type="component" value="Chromosome"/>
</dbReference>
<dbReference type="GO" id="GO:0005737">
    <property type="term" value="C:cytoplasm"/>
    <property type="evidence" value="ECO:0007669"/>
    <property type="project" value="UniProtKB-SubCell"/>
</dbReference>
<dbReference type="Gene3D" id="3.30.500.20">
    <property type="entry name" value="BH3703-like domains"/>
    <property type="match status" value="1"/>
</dbReference>
<dbReference type="InterPro" id="IPR006728">
    <property type="entry name" value="YezG-like"/>
</dbReference>
<dbReference type="InterPro" id="IPR036170">
    <property type="entry name" value="YezG-like_sf"/>
</dbReference>
<dbReference type="NCBIfam" id="TIGR01741">
    <property type="entry name" value="staph_tand_hypo"/>
    <property type="match status" value="1"/>
</dbReference>
<dbReference type="Pfam" id="PF04634">
    <property type="entry name" value="YezG-like"/>
    <property type="match status" value="1"/>
</dbReference>
<dbReference type="SUPFAM" id="SSF160424">
    <property type="entry name" value="BH3703-like"/>
    <property type="match status" value="1"/>
</dbReference>
<protein>
    <recommendedName>
        <fullName>Immunity protein YezG</fullName>
    </recommendedName>
</protein>
<proteinExistence type="evidence at protein level"/>
<gene>
    <name type="primary">yezG</name>
    <name type="synonym">yeeE</name>
    <name type="ordered locus">BSU06811</name>
</gene>
<accession>C0H3X4</accession>
<accession>O30580</accession>
<organism>
    <name type="scientific">Bacillus subtilis (strain 168)</name>
    <dbReference type="NCBI Taxonomy" id="224308"/>
    <lineage>
        <taxon>Bacteria</taxon>
        <taxon>Bacillati</taxon>
        <taxon>Bacillota</taxon>
        <taxon>Bacilli</taxon>
        <taxon>Bacillales</taxon>
        <taxon>Bacillaceae</taxon>
        <taxon>Bacillus</taxon>
    </lineage>
</organism>
<evidence type="ECO:0000250" key="1">
    <source>
        <dbReference type="UniProtKB" id="E0TU95"/>
    </source>
</evidence>
<evidence type="ECO:0000255" key="2"/>
<evidence type="ECO:0000269" key="3">
    <source>
    </source>
</evidence>
<evidence type="ECO:0000269" key="4">
    <source>
    </source>
</evidence>
<evidence type="ECO:0000305" key="5"/>
<evidence type="ECO:0000305" key="6">
    <source>
    </source>
</evidence>
<sequence>MQDLYQLIGEKLNDIIPGEWTKIYLYAEVLDDSTMVLFHFRTPENNQIIYSQDIPSHYNVSKDIFKTLLRELRELFEELRTEHRNNNDDVWTNLTLTLDRSGEFQLDYNYDDILASELDGYERIAIWEYKNLGILPEDEDDKEFVISYLGL</sequence>